<protein>
    <recommendedName>
        <fullName evidence="1">3-methyl-2-oxobutanoate hydroxymethyltransferase</fullName>
        <ecNumber evidence="1">2.1.2.11</ecNumber>
    </recommendedName>
    <alternativeName>
        <fullName evidence="1">Ketopantoate hydroxymethyltransferase</fullName>
        <shortName evidence="1">KPHMT</shortName>
    </alternativeName>
</protein>
<accession>A6QK86</accession>
<evidence type="ECO:0000255" key="1">
    <source>
        <dbReference type="HAMAP-Rule" id="MF_00156"/>
    </source>
</evidence>
<gene>
    <name evidence="1" type="primary">panB</name>
    <name type="ordered locus">NWMN_2496</name>
</gene>
<comment type="function">
    <text evidence="1">Catalyzes the reversible reaction in which hydroxymethyl group from 5,10-methylenetetrahydrofolate is transferred onto alpha-ketoisovalerate to form ketopantoate.</text>
</comment>
<comment type="catalytic activity">
    <reaction evidence="1">
        <text>3-methyl-2-oxobutanoate + (6R)-5,10-methylene-5,6,7,8-tetrahydrofolate + H2O = 2-dehydropantoate + (6S)-5,6,7,8-tetrahydrofolate</text>
        <dbReference type="Rhea" id="RHEA:11824"/>
        <dbReference type="ChEBI" id="CHEBI:11561"/>
        <dbReference type="ChEBI" id="CHEBI:11851"/>
        <dbReference type="ChEBI" id="CHEBI:15377"/>
        <dbReference type="ChEBI" id="CHEBI:15636"/>
        <dbReference type="ChEBI" id="CHEBI:57453"/>
        <dbReference type="EC" id="2.1.2.11"/>
    </reaction>
</comment>
<comment type="cofactor">
    <cofactor evidence="1">
        <name>Mg(2+)</name>
        <dbReference type="ChEBI" id="CHEBI:18420"/>
    </cofactor>
    <text evidence="1">Binds 1 Mg(2+) ion per subunit.</text>
</comment>
<comment type="pathway">
    <text evidence="1">Cofactor biosynthesis; (R)-pantothenate biosynthesis; (R)-pantoate from 3-methyl-2-oxobutanoate: step 1/2.</text>
</comment>
<comment type="subunit">
    <text evidence="1">Homodecamer; pentamer of dimers.</text>
</comment>
<comment type="subcellular location">
    <subcellularLocation>
        <location evidence="1">Cytoplasm</location>
    </subcellularLocation>
</comment>
<comment type="similarity">
    <text evidence="1">Belongs to the PanB family.</text>
</comment>
<proteinExistence type="inferred from homology"/>
<feature type="chain" id="PRO_1000071532" description="3-methyl-2-oxobutanoate hydroxymethyltransferase">
    <location>
        <begin position="1"/>
        <end position="272"/>
    </location>
</feature>
<feature type="active site" description="Proton acceptor" evidence="1">
    <location>
        <position position="179"/>
    </location>
</feature>
<feature type="binding site" evidence="1">
    <location>
        <begin position="43"/>
        <end position="44"/>
    </location>
    <ligand>
        <name>3-methyl-2-oxobutanoate</name>
        <dbReference type="ChEBI" id="CHEBI:11851"/>
    </ligand>
</feature>
<feature type="binding site" evidence="1">
    <location>
        <position position="43"/>
    </location>
    <ligand>
        <name>Mg(2+)</name>
        <dbReference type="ChEBI" id="CHEBI:18420"/>
    </ligand>
</feature>
<feature type="binding site" evidence="1">
    <location>
        <position position="82"/>
    </location>
    <ligand>
        <name>3-methyl-2-oxobutanoate</name>
        <dbReference type="ChEBI" id="CHEBI:11851"/>
    </ligand>
</feature>
<feature type="binding site" evidence="1">
    <location>
        <position position="82"/>
    </location>
    <ligand>
        <name>Mg(2+)</name>
        <dbReference type="ChEBI" id="CHEBI:18420"/>
    </ligand>
</feature>
<feature type="binding site" evidence="1">
    <location>
        <position position="112"/>
    </location>
    <ligand>
        <name>3-methyl-2-oxobutanoate</name>
        <dbReference type="ChEBI" id="CHEBI:11851"/>
    </ligand>
</feature>
<feature type="binding site" evidence="1">
    <location>
        <position position="114"/>
    </location>
    <ligand>
        <name>Mg(2+)</name>
        <dbReference type="ChEBI" id="CHEBI:18420"/>
    </ligand>
</feature>
<dbReference type="EC" id="2.1.2.11" evidence="1"/>
<dbReference type="EMBL" id="AP009351">
    <property type="protein sequence ID" value="BAF68768.1"/>
    <property type="molecule type" value="Genomic_DNA"/>
</dbReference>
<dbReference type="RefSeq" id="WP_000860043.1">
    <property type="nucleotide sequence ID" value="NZ_JBBIAE010000005.1"/>
</dbReference>
<dbReference type="SMR" id="A6QK86"/>
<dbReference type="KEGG" id="sae:NWMN_2496"/>
<dbReference type="HOGENOM" id="CLU_036645_1_0_9"/>
<dbReference type="UniPathway" id="UPA00028">
    <property type="reaction ID" value="UER00003"/>
</dbReference>
<dbReference type="Proteomes" id="UP000006386">
    <property type="component" value="Chromosome"/>
</dbReference>
<dbReference type="GO" id="GO:0005737">
    <property type="term" value="C:cytoplasm"/>
    <property type="evidence" value="ECO:0007669"/>
    <property type="project" value="UniProtKB-SubCell"/>
</dbReference>
<dbReference type="GO" id="GO:0003864">
    <property type="term" value="F:3-methyl-2-oxobutanoate hydroxymethyltransferase activity"/>
    <property type="evidence" value="ECO:0007669"/>
    <property type="project" value="UniProtKB-UniRule"/>
</dbReference>
<dbReference type="GO" id="GO:0000287">
    <property type="term" value="F:magnesium ion binding"/>
    <property type="evidence" value="ECO:0007669"/>
    <property type="project" value="TreeGrafter"/>
</dbReference>
<dbReference type="GO" id="GO:0015940">
    <property type="term" value="P:pantothenate biosynthetic process"/>
    <property type="evidence" value="ECO:0007669"/>
    <property type="project" value="UniProtKB-UniRule"/>
</dbReference>
<dbReference type="CDD" id="cd06557">
    <property type="entry name" value="KPHMT-like"/>
    <property type="match status" value="1"/>
</dbReference>
<dbReference type="FunFam" id="3.20.20.60:FF:000030">
    <property type="entry name" value="3-methyl-2-oxobutanoate hydroxymethyltransferase"/>
    <property type="match status" value="1"/>
</dbReference>
<dbReference type="Gene3D" id="3.20.20.60">
    <property type="entry name" value="Phosphoenolpyruvate-binding domains"/>
    <property type="match status" value="1"/>
</dbReference>
<dbReference type="HAMAP" id="MF_00156">
    <property type="entry name" value="PanB"/>
    <property type="match status" value="1"/>
</dbReference>
<dbReference type="InterPro" id="IPR003700">
    <property type="entry name" value="Pantoate_hydroxy_MeTrfase"/>
</dbReference>
<dbReference type="InterPro" id="IPR015813">
    <property type="entry name" value="Pyrv/PenolPyrv_kinase-like_dom"/>
</dbReference>
<dbReference type="InterPro" id="IPR040442">
    <property type="entry name" value="Pyrv_kinase-like_dom_sf"/>
</dbReference>
<dbReference type="NCBIfam" id="TIGR00222">
    <property type="entry name" value="panB"/>
    <property type="match status" value="1"/>
</dbReference>
<dbReference type="NCBIfam" id="NF001452">
    <property type="entry name" value="PRK00311.1"/>
    <property type="match status" value="1"/>
</dbReference>
<dbReference type="PANTHER" id="PTHR20881">
    <property type="entry name" value="3-METHYL-2-OXOBUTANOATE HYDROXYMETHYLTRANSFERASE"/>
    <property type="match status" value="1"/>
</dbReference>
<dbReference type="PANTHER" id="PTHR20881:SF0">
    <property type="entry name" value="3-METHYL-2-OXOBUTANOATE HYDROXYMETHYLTRANSFERASE"/>
    <property type="match status" value="1"/>
</dbReference>
<dbReference type="Pfam" id="PF02548">
    <property type="entry name" value="Pantoate_transf"/>
    <property type="match status" value="1"/>
</dbReference>
<dbReference type="PIRSF" id="PIRSF000388">
    <property type="entry name" value="Pantoate_hydroxy_MeTrfase"/>
    <property type="match status" value="1"/>
</dbReference>
<dbReference type="SUPFAM" id="SSF51621">
    <property type="entry name" value="Phosphoenolpyruvate/pyruvate domain"/>
    <property type="match status" value="1"/>
</dbReference>
<organism>
    <name type="scientific">Staphylococcus aureus (strain Newman)</name>
    <dbReference type="NCBI Taxonomy" id="426430"/>
    <lineage>
        <taxon>Bacteria</taxon>
        <taxon>Bacillati</taxon>
        <taxon>Bacillota</taxon>
        <taxon>Bacilli</taxon>
        <taxon>Bacillales</taxon>
        <taxon>Staphylococcaceae</taxon>
        <taxon>Staphylococcus</taxon>
    </lineage>
</organism>
<reference key="1">
    <citation type="journal article" date="2008" name="J. Bacteriol.">
        <title>Genome sequence of Staphylococcus aureus strain Newman and comparative analysis of staphylococcal genomes: polymorphism and evolution of two major pathogenicity islands.</title>
        <authorList>
            <person name="Baba T."/>
            <person name="Bae T."/>
            <person name="Schneewind O."/>
            <person name="Takeuchi F."/>
            <person name="Hiramatsu K."/>
        </authorList>
    </citation>
    <scope>NUCLEOTIDE SEQUENCE [LARGE SCALE GENOMIC DNA]</scope>
    <source>
        <strain>Newman</strain>
    </source>
</reference>
<keyword id="KW-0963">Cytoplasm</keyword>
<keyword id="KW-0460">Magnesium</keyword>
<keyword id="KW-0479">Metal-binding</keyword>
<keyword id="KW-0566">Pantothenate biosynthesis</keyword>
<keyword id="KW-0808">Transferase</keyword>
<name>PANB_STAAE</name>
<sequence>MKTVSQLIDMKQKQTKISMVTAYDFPSAKQVEAAGIDMILVGDSLGMTVLGYESIVQVTLADMIHHGRAVRRGAPNTFVVVDMPIGAVGISMTQDLNHALKLYQETNANAIKAEGAHITPFIEKATAIGIPVVAHLGLTPQSVGVMGYKLQGATKEAAEQLILDAKNVEQAGAVALVLEAIPNDLAEEISKHLTIPVIGIGAGKGTDGQVLVYHDMLNYGVEHKAKFVKQFADFSVGVDGLKQYDQEVKSGAFPSEEYTYKKKIMNEVNNND</sequence>